<proteinExistence type="inferred from homology"/>
<reference key="1">
    <citation type="journal article" date="2007" name="Proc. Natl. Acad. Sci. U.S.A.">
        <title>Genome and proteome of long-chain alkane degrading Geobacillus thermodenitrificans NG80-2 isolated from a deep-subsurface oil reservoir.</title>
        <authorList>
            <person name="Feng L."/>
            <person name="Wang W."/>
            <person name="Cheng J."/>
            <person name="Ren Y."/>
            <person name="Zhao G."/>
            <person name="Gao C."/>
            <person name="Tang Y."/>
            <person name="Liu X."/>
            <person name="Han W."/>
            <person name="Peng X."/>
            <person name="Liu R."/>
            <person name="Wang L."/>
        </authorList>
    </citation>
    <scope>NUCLEOTIDE SEQUENCE [LARGE SCALE GENOMIC DNA]</scope>
    <source>
        <strain>NG80-2</strain>
    </source>
</reference>
<dbReference type="EC" id="6.1.1.19" evidence="1"/>
<dbReference type="EMBL" id="CP000557">
    <property type="protein sequence ID" value="ABO68683.1"/>
    <property type="molecule type" value="Genomic_DNA"/>
</dbReference>
<dbReference type="RefSeq" id="WP_008880735.1">
    <property type="nucleotide sequence ID" value="NC_009328.1"/>
</dbReference>
<dbReference type="SMR" id="A4ITM9"/>
<dbReference type="GeneID" id="87622545"/>
<dbReference type="KEGG" id="gtn:GTNG_3346"/>
<dbReference type="eggNOG" id="COG0018">
    <property type="taxonomic scope" value="Bacteria"/>
</dbReference>
<dbReference type="HOGENOM" id="CLU_006406_0_1_9"/>
<dbReference type="Proteomes" id="UP000001578">
    <property type="component" value="Chromosome"/>
</dbReference>
<dbReference type="GO" id="GO:0005737">
    <property type="term" value="C:cytoplasm"/>
    <property type="evidence" value="ECO:0007669"/>
    <property type="project" value="UniProtKB-SubCell"/>
</dbReference>
<dbReference type="GO" id="GO:0004814">
    <property type="term" value="F:arginine-tRNA ligase activity"/>
    <property type="evidence" value="ECO:0007669"/>
    <property type="project" value="UniProtKB-UniRule"/>
</dbReference>
<dbReference type="GO" id="GO:0005524">
    <property type="term" value="F:ATP binding"/>
    <property type="evidence" value="ECO:0007669"/>
    <property type="project" value="UniProtKB-UniRule"/>
</dbReference>
<dbReference type="GO" id="GO:0006420">
    <property type="term" value="P:arginyl-tRNA aminoacylation"/>
    <property type="evidence" value="ECO:0007669"/>
    <property type="project" value="UniProtKB-UniRule"/>
</dbReference>
<dbReference type="CDD" id="cd07956">
    <property type="entry name" value="Anticodon_Ia_Arg"/>
    <property type="match status" value="1"/>
</dbReference>
<dbReference type="CDD" id="cd00671">
    <property type="entry name" value="ArgRS_core"/>
    <property type="match status" value="1"/>
</dbReference>
<dbReference type="FunFam" id="1.10.730.10:FF:000008">
    <property type="entry name" value="Arginine--tRNA ligase"/>
    <property type="match status" value="1"/>
</dbReference>
<dbReference type="FunFam" id="3.30.1360.70:FF:000003">
    <property type="entry name" value="Arginine--tRNA ligase"/>
    <property type="match status" value="1"/>
</dbReference>
<dbReference type="FunFam" id="3.40.50.620:FF:000062">
    <property type="entry name" value="Arginine--tRNA ligase"/>
    <property type="match status" value="1"/>
</dbReference>
<dbReference type="Gene3D" id="3.30.1360.70">
    <property type="entry name" value="Arginyl tRNA synthetase N-terminal domain"/>
    <property type="match status" value="1"/>
</dbReference>
<dbReference type="Gene3D" id="3.40.50.620">
    <property type="entry name" value="HUPs"/>
    <property type="match status" value="1"/>
</dbReference>
<dbReference type="Gene3D" id="1.10.730.10">
    <property type="entry name" value="Isoleucyl-tRNA Synthetase, Domain 1"/>
    <property type="match status" value="1"/>
</dbReference>
<dbReference type="HAMAP" id="MF_00123">
    <property type="entry name" value="Arg_tRNA_synth"/>
    <property type="match status" value="1"/>
</dbReference>
<dbReference type="InterPro" id="IPR001412">
    <property type="entry name" value="aa-tRNA-synth_I_CS"/>
</dbReference>
<dbReference type="InterPro" id="IPR001278">
    <property type="entry name" value="Arg-tRNA-ligase"/>
</dbReference>
<dbReference type="InterPro" id="IPR005148">
    <property type="entry name" value="Arg-tRNA-synth_N"/>
</dbReference>
<dbReference type="InterPro" id="IPR036695">
    <property type="entry name" value="Arg-tRNA-synth_N_sf"/>
</dbReference>
<dbReference type="InterPro" id="IPR035684">
    <property type="entry name" value="ArgRS_core"/>
</dbReference>
<dbReference type="InterPro" id="IPR008909">
    <property type="entry name" value="DALR_anticod-bd"/>
</dbReference>
<dbReference type="InterPro" id="IPR014729">
    <property type="entry name" value="Rossmann-like_a/b/a_fold"/>
</dbReference>
<dbReference type="InterPro" id="IPR009080">
    <property type="entry name" value="tRNAsynth_Ia_anticodon-bd"/>
</dbReference>
<dbReference type="NCBIfam" id="TIGR00456">
    <property type="entry name" value="argS"/>
    <property type="match status" value="1"/>
</dbReference>
<dbReference type="PANTHER" id="PTHR11956:SF5">
    <property type="entry name" value="ARGININE--TRNA LIGASE, CYTOPLASMIC"/>
    <property type="match status" value="1"/>
</dbReference>
<dbReference type="PANTHER" id="PTHR11956">
    <property type="entry name" value="ARGINYL-TRNA SYNTHETASE"/>
    <property type="match status" value="1"/>
</dbReference>
<dbReference type="Pfam" id="PF03485">
    <property type="entry name" value="Arg_tRNA_synt_N"/>
    <property type="match status" value="1"/>
</dbReference>
<dbReference type="Pfam" id="PF05746">
    <property type="entry name" value="DALR_1"/>
    <property type="match status" value="1"/>
</dbReference>
<dbReference type="Pfam" id="PF00750">
    <property type="entry name" value="tRNA-synt_1d"/>
    <property type="match status" value="1"/>
</dbReference>
<dbReference type="PRINTS" id="PR01038">
    <property type="entry name" value="TRNASYNTHARG"/>
</dbReference>
<dbReference type="SMART" id="SM01016">
    <property type="entry name" value="Arg_tRNA_synt_N"/>
    <property type="match status" value="1"/>
</dbReference>
<dbReference type="SMART" id="SM00836">
    <property type="entry name" value="DALR_1"/>
    <property type="match status" value="1"/>
</dbReference>
<dbReference type="SUPFAM" id="SSF47323">
    <property type="entry name" value="Anticodon-binding domain of a subclass of class I aminoacyl-tRNA synthetases"/>
    <property type="match status" value="1"/>
</dbReference>
<dbReference type="SUPFAM" id="SSF55190">
    <property type="entry name" value="Arginyl-tRNA synthetase (ArgRS), N-terminal 'additional' domain"/>
    <property type="match status" value="1"/>
</dbReference>
<dbReference type="SUPFAM" id="SSF52374">
    <property type="entry name" value="Nucleotidylyl transferase"/>
    <property type="match status" value="1"/>
</dbReference>
<dbReference type="PROSITE" id="PS00178">
    <property type="entry name" value="AA_TRNA_LIGASE_I"/>
    <property type="match status" value="1"/>
</dbReference>
<gene>
    <name evidence="1" type="primary">argS</name>
    <name type="ordered locus">GTNG_3346</name>
</gene>
<organism>
    <name type="scientific">Geobacillus thermodenitrificans (strain NG80-2)</name>
    <dbReference type="NCBI Taxonomy" id="420246"/>
    <lineage>
        <taxon>Bacteria</taxon>
        <taxon>Bacillati</taxon>
        <taxon>Bacillota</taxon>
        <taxon>Bacilli</taxon>
        <taxon>Bacillales</taxon>
        <taxon>Anoxybacillaceae</taxon>
        <taxon>Geobacillus</taxon>
    </lineage>
</organism>
<protein>
    <recommendedName>
        <fullName evidence="1">Arginine--tRNA ligase</fullName>
        <ecNumber evidence="1">6.1.1.19</ecNumber>
    </recommendedName>
    <alternativeName>
        <fullName evidence="1">Arginyl-tRNA synthetase</fullName>
        <shortName evidence="1">ArgRS</shortName>
    </alternativeName>
</protein>
<name>SYR_GEOTN</name>
<comment type="catalytic activity">
    <reaction evidence="1">
        <text>tRNA(Arg) + L-arginine + ATP = L-arginyl-tRNA(Arg) + AMP + diphosphate</text>
        <dbReference type="Rhea" id="RHEA:20301"/>
        <dbReference type="Rhea" id="RHEA-COMP:9658"/>
        <dbReference type="Rhea" id="RHEA-COMP:9673"/>
        <dbReference type="ChEBI" id="CHEBI:30616"/>
        <dbReference type="ChEBI" id="CHEBI:32682"/>
        <dbReference type="ChEBI" id="CHEBI:33019"/>
        <dbReference type="ChEBI" id="CHEBI:78442"/>
        <dbReference type="ChEBI" id="CHEBI:78513"/>
        <dbReference type="ChEBI" id="CHEBI:456215"/>
        <dbReference type="EC" id="6.1.1.19"/>
    </reaction>
</comment>
<comment type="subunit">
    <text evidence="1">Monomer.</text>
</comment>
<comment type="subcellular location">
    <subcellularLocation>
        <location evidence="1">Cytoplasm</location>
    </subcellularLocation>
</comment>
<comment type="similarity">
    <text evidence="1">Belongs to the class-I aminoacyl-tRNA synthetase family.</text>
</comment>
<feature type="chain" id="PRO_1000018034" description="Arginine--tRNA ligase">
    <location>
        <begin position="1"/>
        <end position="557"/>
    </location>
</feature>
<feature type="short sequence motif" description="'HIGH' region">
    <location>
        <begin position="132"/>
        <end position="142"/>
    </location>
</feature>
<accession>A4ITM9</accession>
<keyword id="KW-0030">Aminoacyl-tRNA synthetase</keyword>
<keyword id="KW-0067">ATP-binding</keyword>
<keyword id="KW-0963">Cytoplasm</keyword>
<keyword id="KW-0436">Ligase</keyword>
<keyword id="KW-0547">Nucleotide-binding</keyword>
<keyword id="KW-0648">Protein biosynthesis</keyword>
<evidence type="ECO:0000255" key="1">
    <source>
        <dbReference type="HAMAP-Rule" id="MF_00123"/>
    </source>
</evidence>
<sequence>MNIVGQMKEQLKEEIRQAVGKAGLVAAEELPEVLLEVPREKAHGDYSTNIAMQLARIAKKPPRAIAEAIVEKFDAERVSVARIEVAGPGFINFYMDNRYLTAVVPAILQAGQAYGESNVGKGEKVQVEFVSANPTGNLHLGHARGAAVGDSLSNILAKAGFDVTREYYINDAGKQIYNLAKSVEARYFQALGTDMPLPEDGYYGDDIVEIGKKLADEYGDRFVHVDEEERLAFFREYGLRYELDKIKNDLAAFRVPFDVWYSETSLYESGKIDEALSTLRERGYIYEQDGATWFRSTAFGDDKDRVLIKQDGTYTYLLPDIAYHQDKLRRGFTKLINVWGADHHGYIPRMKAAIAALGYDPEALEVEIIQMVNLYQNGERVKMSKRTGKAVTMRELMEEVGVDAVRYFFAMRSGDTHLDFDMDLAVAQSNENPVYYVQYAHARVSSILRQAKEHQLSYEGDVDLHHLVETEKEIELLKALGDFPDVVAEAALKRMPHRVTAYAFDLASALHSFYNAEKVLDLDQIEKTKARLALVKAVQITLQNALALIGVSAPEQM</sequence>